<reference key="1">
    <citation type="journal article" date="2020" name="Angew. Chem. Int. Ed.">
        <title>Quinolactacin biosynthesis involves non-ribosomal-peptide-synthetase-catalyzed Dieckmann condensation to form the quinolone-gamma-lactam hybrid.</title>
        <authorList>
            <person name="Zhao F."/>
            <person name="Liu Z."/>
            <person name="Yang S."/>
            <person name="Ding N."/>
            <person name="Gao X."/>
        </authorList>
    </citation>
    <scope>FUNCTION</scope>
    <scope>CATALYTIC ACTIVITY</scope>
    <scope>DISRUPTION PHENOTYPE</scope>
    <scope>PATHWAY</scope>
</reference>
<proteinExistence type="evidence at protein level"/>
<protein>
    <recommendedName>
        <fullName evidence="3">Indoleamine 2,3-dioxygenase qulI</fullName>
        <shortName evidence="3">IDO qulI</shortName>
        <ecNumber evidence="2">1.13.11.52</ecNumber>
    </recommendedName>
    <alternativeName>
        <fullName evidence="3">Quinolactacin A2 biosynthesis cluster protein I</fullName>
    </alternativeName>
</protein>
<evidence type="ECO:0000250" key="1">
    <source>
        <dbReference type="UniProtKB" id="P14902"/>
    </source>
</evidence>
<evidence type="ECO:0000269" key="2">
    <source>
    </source>
</evidence>
<evidence type="ECO:0000303" key="3">
    <source>
    </source>
</evidence>
<evidence type="ECO:0000305" key="4"/>
<dbReference type="EC" id="1.13.11.52" evidence="2"/>
<dbReference type="SMR" id="P0DUR8"/>
<dbReference type="GO" id="GO:0005737">
    <property type="term" value="C:cytoplasm"/>
    <property type="evidence" value="ECO:0007669"/>
    <property type="project" value="TreeGrafter"/>
</dbReference>
<dbReference type="GO" id="GO:0020037">
    <property type="term" value="F:heme binding"/>
    <property type="evidence" value="ECO:0007669"/>
    <property type="project" value="InterPro"/>
</dbReference>
<dbReference type="GO" id="GO:0033754">
    <property type="term" value="F:indoleamine 2,3-dioxygenase activity"/>
    <property type="evidence" value="ECO:0007669"/>
    <property type="project" value="TreeGrafter"/>
</dbReference>
<dbReference type="GO" id="GO:0046872">
    <property type="term" value="F:metal ion binding"/>
    <property type="evidence" value="ECO:0007669"/>
    <property type="project" value="UniProtKB-KW"/>
</dbReference>
<dbReference type="GO" id="GO:0034354">
    <property type="term" value="P:'de novo' NAD biosynthetic process from L-tryptophan"/>
    <property type="evidence" value="ECO:0007669"/>
    <property type="project" value="TreeGrafter"/>
</dbReference>
<dbReference type="GO" id="GO:0019441">
    <property type="term" value="P:L-tryptophan catabolic process to kynurenine"/>
    <property type="evidence" value="ECO:0007669"/>
    <property type="project" value="InterPro"/>
</dbReference>
<dbReference type="Gene3D" id="1.20.58.480">
    <property type="match status" value="1"/>
</dbReference>
<dbReference type="InterPro" id="IPR000898">
    <property type="entry name" value="Indolamine_dOase"/>
</dbReference>
<dbReference type="InterPro" id="IPR037217">
    <property type="entry name" value="Trp/Indoleamine_2_3_dOase-like"/>
</dbReference>
<dbReference type="PANTHER" id="PTHR28657">
    <property type="entry name" value="INDOLEAMINE 2,3-DIOXYGENASE"/>
    <property type="match status" value="1"/>
</dbReference>
<dbReference type="PANTHER" id="PTHR28657:SF10">
    <property type="entry name" value="INDOLEAMINE 2,3-DIOXYGENASE"/>
    <property type="match status" value="1"/>
</dbReference>
<dbReference type="Pfam" id="PF01231">
    <property type="entry name" value="IDO"/>
    <property type="match status" value="1"/>
</dbReference>
<dbReference type="SUPFAM" id="SSF140959">
    <property type="entry name" value="Indolic compounds 2,3-dioxygenase-like"/>
    <property type="match status" value="1"/>
</dbReference>
<dbReference type="PROSITE" id="PS00876">
    <property type="entry name" value="IDO_1"/>
    <property type="match status" value="1"/>
</dbReference>
<organism>
    <name type="scientific">Penicillium citrinum</name>
    <dbReference type="NCBI Taxonomy" id="5077"/>
    <lineage>
        <taxon>Eukaryota</taxon>
        <taxon>Fungi</taxon>
        <taxon>Dikarya</taxon>
        <taxon>Ascomycota</taxon>
        <taxon>Pezizomycotina</taxon>
        <taxon>Eurotiomycetes</taxon>
        <taxon>Eurotiomycetidae</taxon>
        <taxon>Eurotiales</taxon>
        <taxon>Aspergillaceae</taxon>
        <taxon>Penicillium</taxon>
    </lineage>
</organism>
<comment type="function">
    <text evidence="2">Indoleamine 2,3-dioxygenase; part of the gene cluster that mediates the biosynthesis of quinolactacin A2 (QUL A2), a fungal alkaloid that features a quinolone-gamma-lactam hybrid, which is a potential pharmacophore for the treatment of cancer and Alzheimer's disease (PubMed:32663343). The quinolone-gamma-lactam hybrid scaffold is synthesized from the combination of L-isoleucine (L-Ile) and the nonproteinogenic amino acid L-kynurenine, followed by quinolone cyclization, oxidative decarboxylation, and lactam formation (PubMed:32663343). Additionally, the N-methyl group is derived from methionine, which might be catalyzed by an S-adenosylmethionine (SAM)-dependent methyltransferase (PubMed:32663343). Bioconversion of L-tryptophan to L-kynurenine could be catalyzed by the indoleamine-2,3-dioxygenase (IDO) qulI to produce an unstable product, N-formyl-L-kynurenine, followed by kynurenine formamidase catalyzed hydrolysis (PubMed:32663343). QulM then acts as a methyltransferase that methylates L-kynurenine at the N-4 position (PubMed:32663343). The FMN-dependent alpha-hydroxy acid dehydrogenase qulF than functions as an oxidative decarboxylase which converts N-methylkynurenine into 2-aminobenzoylacetamide via 2 tandem reactions, including dehydrogenation and decarboxylation (PubMed:32663343). An amidase located outside of the qul gene cluster further produces the unstable beta-keto acid precursor N-methyl-2-aminobenzoylacetate, which could be spontaneously dehydrated to form N-methyl-4-hydroxy-2-quinolone (PubMed:32663343). The NRPS qulB is able to incorporate N-methyl-2-aminobenzoylacetate and efficiently compete with the spontaneous reaction (PubMed:32663343). By further extending the beta-keto acid with L-Ile, qulA performs a Dieckmann condensation to form the gamma-lactam ring and release a 4-ketopyrrolidinone intermediate from the assembly line (PubMed:32663343). This intermediate could plausibly further undergo a spontaneous cyclization to yield the final quinolone-gamma-lactam hybrid structure (PubMed:32663343).</text>
</comment>
<comment type="catalytic activity">
    <reaction evidence="2">
        <text>D-tryptophan + O2 = N-formyl-D-kynurenine</text>
        <dbReference type="Rhea" id="RHEA:14189"/>
        <dbReference type="ChEBI" id="CHEBI:15379"/>
        <dbReference type="ChEBI" id="CHEBI:57719"/>
        <dbReference type="ChEBI" id="CHEBI:60051"/>
        <dbReference type="EC" id="1.13.11.52"/>
    </reaction>
</comment>
<comment type="catalytic activity">
    <reaction evidence="1">
        <text>L-tryptophan + O2 = N-formyl-L-kynurenine</text>
        <dbReference type="Rhea" id="RHEA:24536"/>
        <dbReference type="ChEBI" id="CHEBI:15379"/>
        <dbReference type="ChEBI" id="CHEBI:57912"/>
        <dbReference type="ChEBI" id="CHEBI:58629"/>
        <dbReference type="EC" id="1.13.11.52"/>
    </reaction>
</comment>
<comment type="cofactor">
    <cofactor evidence="1">
        <name>heme</name>
        <dbReference type="ChEBI" id="CHEBI:30413"/>
    </cofactor>
    <text evidence="1">Binds 1 heme group per subunit.</text>
</comment>
<comment type="pathway">
    <text evidence="2">Secondary metabolite biosynthesis.</text>
</comment>
<comment type="subunit">
    <text evidence="1">Monomer.</text>
</comment>
<comment type="disruption phenotype">
    <text evidence="2">Does not completely abolish the production of quinolactacin A2, but leasd to substantial attenuation of the titer to about 5%.</text>
</comment>
<comment type="similarity">
    <text evidence="4">Belongs to the indoleamine 2,3-dioxygenase family.</text>
</comment>
<sequence>MKHFRDLDLSSYSLSSVSGFLPERPALERLPNPYYDHWEDLSRNLPQLVASDTLKDKLERLPILSTALLDSEEEWRRAYVVLSFLSQGYIWSGDQPRRNLPIAIAAPLRRVSEYLTIMPCGTFAAYCLWNVIPSPKFGNPQINPEDFISTCTFTGSKEEEWFYVISVAIEARGGRLIPKILDAIDAVKENDTPRVRSFLEAFITCVDGIILVLDRMGENLSQEFFYHRLRPYLRGGKNMAQVGLPDGIFYPLCQCEGGEGEWLAYSGGSNAQSSLIQLMDITLGTCQNVEFIKEMRNYMPGPHREFLELMTSVSNIRPYILSLGNDSDVRSLYDKAVLRLAALRDCHLRVVARYILIPAGKKNPSGHRQLQERGRGTGGTDIMKFLRETRNNTLSACCEQSKGSTVVQTYPKRCETCGSGPIDRTTLIKKATVVINEIEC</sequence>
<accession>P0DUR8</accession>
<name>QULI_PENCI</name>
<keyword id="KW-0223">Dioxygenase</keyword>
<keyword id="KW-0349">Heme</keyword>
<keyword id="KW-0408">Iron</keyword>
<keyword id="KW-0479">Metal-binding</keyword>
<keyword id="KW-0560">Oxidoreductase</keyword>
<feature type="chain" id="PRO_0000453482" description="Indoleamine 2,3-dioxygenase qulI">
    <location>
        <begin position="1"/>
        <end position="440"/>
    </location>
</feature>
<feature type="binding site" description="proximal binding residue" evidence="1">
    <location>
        <position position="347"/>
    </location>
    <ligand>
        <name>heme</name>
        <dbReference type="ChEBI" id="CHEBI:30413"/>
    </ligand>
    <ligandPart>
        <name>Fe</name>
        <dbReference type="ChEBI" id="CHEBI:18248"/>
    </ligandPart>
</feature>